<feature type="chain" id="PRO_0000186778" description="Endogenous retrovirus group K member 113 Rec protein">
    <location>
        <begin position="1"/>
        <end position="105"/>
    </location>
</feature>
<feature type="region of interest" description="Disordered" evidence="3">
    <location>
        <begin position="1"/>
        <end position="49"/>
    </location>
</feature>
<feature type="short sequence motif" description="Nuclear localization signal" evidence="2">
    <location>
        <begin position="13"/>
        <end position="20"/>
    </location>
</feature>
<feature type="short sequence motif" description="Nuclear export signal" evidence="2">
    <location>
        <begin position="50"/>
        <end position="59"/>
    </location>
</feature>
<feature type="compositionally biased region" description="Basic residues" evidence="3">
    <location>
        <begin position="10"/>
        <end position="20"/>
    </location>
</feature>
<accession>P61574</accession>
<sequence length="105" mass="11828">MNPSEMQRKAPPRRRRHRNRAPLTHKMNKMVTSEEQMKLPSTKKAEPPTWAQLKKLTQLATKYLENTKVTQTPESMLLAALMIVSMVSAGVPNSSEETATIENGP</sequence>
<proteinExistence type="evidence at protein level"/>
<name>RE113_HUMAN</name>
<comment type="function">
    <text evidence="1">Retroviral replication requires the nuclear export and translation of unspliced, singly-spliced and multiply-spliced derivatives of the initial genomic transcript. Rec interacts with a highly structured RNA element (RcRE) present in the viral 3'LTR and recruits the cellular nuclear export machinery. This permits export to the cytoplasm of unspliced genomic or incompletely spliced subgenomic viral transcripts (By similarity).</text>
</comment>
<comment type="subunit">
    <text evidence="1">Forms homodimers, homotrimers, and homotetramers via a C-terminal domain. Associates with XPO1 and with ZNF145 (By similarity).</text>
</comment>
<comment type="subcellular location">
    <subcellularLocation>
        <location evidence="1">Cytoplasm</location>
    </subcellularLocation>
    <subcellularLocation>
        <location evidence="1">Nucleus</location>
        <location evidence="1">Nucleolus</location>
    </subcellularLocation>
    <text evidence="1">Shuttles between the nucleus and the cytoplasm. When in the nucleus, resides in the nucleolus (By similarity).</text>
</comment>
<comment type="miscellaneous">
    <text>Despite functional similarity, Rec shares almost no sequence homology with HIV-1 Rev and HTLV-1 Rex.</text>
</comment>
<comment type="miscellaneous">
    <text>Insertional polymorphism. Provirus present in 29% of tested individuals.</text>
</comment>
<comment type="miscellaneous">
    <text>Has a type 2 genome. The HERV-K(HML-2) family contains type 1 and type 2 genomes depending on the absence or presence of 292 nucleotides at the 5'-end of the env gene. Rec proteins are translated from a doubly spliced transcript expressed exclusively by HERV-K(HML-2) type 2 proviral genomes. The first exon comprises the 87 N-terminal amino acids of the HERV-K(HMLM-2) type 2 envelope protein. The second exon (18 amino acids) is positioned in the 3' part of the proviral genome.</text>
</comment>
<reference key="1">
    <citation type="journal article" date="2004" name="Nature">
        <title>The DNA sequence and biology of human chromosome 19.</title>
        <authorList>
            <person name="Grimwood J."/>
            <person name="Gordon L.A."/>
            <person name="Olsen A.S."/>
            <person name="Terry A."/>
            <person name="Schmutz J."/>
            <person name="Lamerdin J.E."/>
            <person name="Hellsten U."/>
            <person name="Goodstein D."/>
            <person name="Couronne O."/>
            <person name="Tran-Gyamfi M."/>
            <person name="Aerts A."/>
            <person name="Altherr M."/>
            <person name="Ashworth L."/>
            <person name="Bajorek E."/>
            <person name="Black S."/>
            <person name="Branscomb E."/>
            <person name="Caenepeel S."/>
            <person name="Carrano A.V."/>
            <person name="Caoile C."/>
            <person name="Chan Y.M."/>
            <person name="Christensen M."/>
            <person name="Cleland C.A."/>
            <person name="Copeland A."/>
            <person name="Dalin E."/>
            <person name="Dehal P."/>
            <person name="Denys M."/>
            <person name="Detter J.C."/>
            <person name="Escobar J."/>
            <person name="Flowers D."/>
            <person name="Fotopulos D."/>
            <person name="Garcia C."/>
            <person name="Georgescu A.M."/>
            <person name="Glavina T."/>
            <person name="Gomez M."/>
            <person name="Gonzales E."/>
            <person name="Groza M."/>
            <person name="Hammon N."/>
            <person name="Hawkins T."/>
            <person name="Haydu L."/>
            <person name="Ho I."/>
            <person name="Huang W."/>
            <person name="Israni S."/>
            <person name="Jett J."/>
            <person name="Kadner K."/>
            <person name="Kimball H."/>
            <person name="Kobayashi A."/>
            <person name="Larionov V."/>
            <person name="Leem S.-H."/>
            <person name="Lopez F."/>
            <person name="Lou Y."/>
            <person name="Lowry S."/>
            <person name="Malfatti S."/>
            <person name="Martinez D."/>
            <person name="McCready P.M."/>
            <person name="Medina C."/>
            <person name="Morgan J."/>
            <person name="Nelson K."/>
            <person name="Nolan M."/>
            <person name="Ovcharenko I."/>
            <person name="Pitluck S."/>
            <person name="Pollard M."/>
            <person name="Popkie A.P."/>
            <person name="Predki P."/>
            <person name="Quan G."/>
            <person name="Ramirez L."/>
            <person name="Rash S."/>
            <person name="Retterer J."/>
            <person name="Rodriguez A."/>
            <person name="Rogers S."/>
            <person name="Salamov A."/>
            <person name="Salazar A."/>
            <person name="She X."/>
            <person name="Smith D."/>
            <person name="Slezak T."/>
            <person name="Solovyev V."/>
            <person name="Thayer N."/>
            <person name="Tice H."/>
            <person name="Tsai M."/>
            <person name="Ustaszewska A."/>
            <person name="Vo N."/>
            <person name="Wagner M."/>
            <person name="Wheeler J."/>
            <person name="Wu K."/>
            <person name="Xie G."/>
            <person name="Yang J."/>
            <person name="Dubchak I."/>
            <person name="Furey T.S."/>
            <person name="DeJong P."/>
            <person name="Dickson M."/>
            <person name="Gordon D."/>
            <person name="Eichler E.E."/>
            <person name="Pennacchio L.A."/>
            <person name="Richardson P."/>
            <person name="Stubbs L."/>
            <person name="Rokhsar D.S."/>
            <person name="Myers R.M."/>
            <person name="Rubin E.M."/>
            <person name="Lucas S.M."/>
        </authorList>
    </citation>
    <scope>NUCLEOTIDE SEQUENCE [LARGE SCALE GENOMIC DNA]</scope>
</reference>
<reference key="2">
    <citation type="journal article" date="2001" name="Curr. Biol.">
        <title>Insertional polymorphisms of full-length endogenous retroviruses in humans.</title>
        <authorList>
            <person name="Turner G."/>
            <person name="Barbulescu M."/>
            <person name="Su M."/>
            <person name="Jensen-Seaman M.I."/>
            <person name="Kidd K.K."/>
            <person name="Lenz J."/>
        </authorList>
    </citation>
    <scope>IDENTIFICATION</scope>
</reference>
<reference key="3">
    <citation type="journal article" date="2004" name="Virology">
        <title>Human endogenous retrovirus HERV-K(HML-2) proviruses with Rec protein coding capacity and transcriptional activity.</title>
        <authorList>
            <person name="Mayer J."/>
            <person name="Ehlhardt S."/>
            <person name="Seifert M."/>
            <person name="Sauter M."/>
            <person name="Mueller-Lantzsch N."/>
            <person name="Mehraein Y."/>
            <person name="Zang K.-D."/>
            <person name="Meese E.U."/>
        </authorList>
    </citation>
    <scope>CHARACTERIZATION</scope>
</reference>
<protein>
    <recommendedName>
        <fullName>Endogenous retrovirus group K member 113 Rec protein</fullName>
    </recommendedName>
    <alternativeName>
        <fullName>HERV-K113 Rec protein</fullName>
    </alternativeName>
    <alternativeName>
        <fullName>HERV-K_19p13.11 provirus Rec protein</fullName>
    </alternativeName>
</protein>
<evidence type="ECO:0000250" key="1"/>
<evidence type="ECO:0000255" key="2"/>
<evidence type="ECO:0000256" key="3">
    <source>
        <dbReference type="SAM" id="MobiDB-lite"/>
    </source>
</evidence>
<organism>
    <name type="scientific">Homo sapiens</name>
    <name type="common">Human</name>
    <dbReference type="NCBI Taxonomy" id="9606"/>
    <lineage>
        <taxon>Eukaryota</taxon>
        <taxon>Metazoa</taxon>
        <taxon>Chordata</taxon>
        <taxon>Craniata</taxon>
        <taxon>Vertebrata</taxon>
        <taxon>Euteleostomi</taxon>
        <taxon>Mammalia</taxon>
        <taxon>Eutheria</taxon>
        <taxon>Euarchontoglires</taxon>
        <taxon>Primates</taxon>
        <taxon>Haplorrhini</taxon>
        <taxon>Catarrhini</taxon>
        <taxon>Hominidae</taxon>
        <taxon>Homo</taxon>
    </lineage>
</organism>
<dbReference type="EMBL" id="AC112702">
    <property type="status" value="NOT_ANNOTATED_CDS"/>
    <property type="molecule type" value="Genomic_DNA"/>
</dbReference>
<dbReference type="SMR" id="P61574"/>
<dbReference type="GlyGen" id="P61574">
    <property type="glycosylation" value="1 site"/>
</dbReference>
<dbReference type="BioMuta" id="HERVK_113"/>
<dbReference type="MassIVE" id="P61574"/>
<dbReference type="neXtProt" id="NX_P61574"/>
<dbReference type="InParanoid" id="P61574"/>
<dbReference type="PhylomeDB" id="P61574"/>
<dbReference type="Pharos" id="P61574">
    <property type="development level" value="Tdark"/>
</dbReference>
<dbReference type="Proteomes" id="UP000005640">
    <property type="component" value="Unplaced"/>
</dbReference>
<dbReference type="RNAct" id="P61574">
    <property type="molecule type" value="protein"/>
</dbReference>
<dbReference type="GO" id="GO:0005737">
    <property type="term" value="C:cytoplasm"/>
    <property type="evidence" value="ECO:0007669"/>
    <property type="project" value="UniProtKB-SubCell"/>
</dbReference>
<dbReference type="GO" id="GO:0005730">
    <property type="term" value="C:nucleolus"/>
    <property type="evidence" value="ECO:0007669"/>
    <property type="project" value="UniProtKB-SubCell"/>
</dbReference>
<dbReference type="GO" id="GO:0003723">
    <property type="term" value="F:RNA binding"/>
    <property type="evidence" value="ECO:0007669"/>
    <property type="project" value="UniProtKB-KW"/>
</dbReference>
<dbReference type="GO" id="GO:0051028">
    <property type="term" value="P:mRNA transport"/>
    <property type="evidence" value="ECO:0007669"/>
    <property type="project" value="UniProtKB-KW"/>
</dbReference>
<dbReference type="Pfam" id="PF15695">
    <property type="entry name" value="HERV-K_REC"/>
    <property type="match status" value="1"/>
</dbReference>
<gene>
    <name type="primary">HERVK_113</name>
</gene>
<keyword id="KW-0963">Cytoplasm</keyword>
<keyword id="KW-0895">ERV</keyword>
<keyword id="KW-0509">mRNA transport</keyword>
<keyword id="KW-0539">Nucleus</keyword>
<keyword id="KW-1185">Reference proteome</keyword>
<keyword id="KW-0694">RNA-binding</keyword>
<keyword id="KW-0813">Transport</keyword>
<keyword id="KW-0814">Transposable element</keyword>